<accession>A8ESW4</accession>
<organism>
    <name type="scientific">Aliarcobacter butzleri (strain RM4018)</name>
    <name type="common">Arcobacter butzleri</name>
    <dbReference type="NCBI Taxonomy" id="367737"/>
    <lineage>
        <taxon>Bacteria</taxon>
        <taxon>Pseudomonadati</taxon>
        <taxon>Campylobacterota</taxon>
        <taxon>Epsilonproteobacteria</taxon>
        <taxon>Campylobacterales</taxon>
        <taxon>Arcobacteraceae</taxon>
        <taxon>Aliarcobacter</taxon>
    </lineage>
</organism>
<keyword id="KW-0963">Cytoplasm</keyword>
<keyword id="KW-0396">Initiation factor</keyword>
<keyword id="KW-0648">Protein biosynthesis</keyword>
<keyword id="KW-1185">Reference proteome</keyword>
<keyword id="KW-0694">RNA-binding</keyword>
<keyword id="KW-0699">rRNA-binding</keyword>
<dbReference type="EMBL" id="CP000361">
    <property type="protein sequence ID" value="ABV67038.1"/>
    <property type="molecule type" value="Genomic_DNA"/>
</dbReference>
<dbReference type="RefSeq" id="WP_004510841.1">
    <property type="nucleotide sequence ID" value="NC_009850.1"/>
</dbReference>
<dbReference type="SMR" id="A8ESW4"/>
<dbReference type="STRING" id="367737.Abu_0773"/>
<dbReference type="GeneID" id="24305414"/>
<dbReference type="KEGG" id="abu:Abu_0773"/>
<dbReference type="eggNOG" id="COG0361">
    <property type="taxonomic scope" value="Bacteria"/>
</dbReference>
<dbReference type="HOGENOM" id="CLU_151267_1_0_7"/>
<dbReference type="Proteomes" id="UP000001136">
    <property type="component" value="Chromosome"/>
</dbReference>
<dbReference type="GO" id="GO:0005829">
    <property type="term" value="C:cytosol"/>
    <property type="evidence" value="ECO:0007669"/>
    <property type="project" value="TreeGrafter"/>
</dbReference>
<dbReference type="GO" id="GO:0043022">
    <property type="term" value="F:ribosome binding"/>
    <property type="evidence" value="ECO:0007669"/>
    <property type="project" value="UniProtKB-UniRule"/>
</dbReference>
<dbReference type="GO" id="GO:0019843">
    <property type="term" value="F:rRNA binding"/>
    <property type="evidence" value="ECO:0007669"/>
    <property type="project" value="UniProtKB-UniRule"/>
</dbReference>
<dbReference type="GO" id="GO:0003743">
    <property type="term" value="F:translation initiation factor activity"/>
    <property type="evidence" value="ECO:0007669"/>
    <property type="project" value="UniProtKB-UniRule"/>
</dbReference>
<dbReference type="CDD" id="cd04451">
    <property type="entry name" value="S1_IF1"/>
    <property type="match status" value="1"/>
</dbReference>
<dbReference type="FunFam" id="2.40.50.140:FF:000002">
    <property type="entry name" value="Translation initiation factor IF-1"/>
    <property type="match status" value="1"/>
</dbReference>
<dbReference type="Gene3D" id="2.40.50.140">
    <property type="entry name" value="Nucleic acid-binding proteins"/>
    <property type="match status" value="1"/>
</dbReference>
<dbReference type="HAMAP" id="MF_00075">
    <property type="entry name" value="IF_1"/>
    <property type="match status" value="1"/>
</dbReference>
<dbReference type="InterPro" id="IPR012340">
    <property type="entry name" value="NA-bd_OB-fold"/>
</dbReference>
<dbReference type="InterPro" id="IPR006196">
    <property type="entry name" value="RNA-binding_domain_S1_IF1"/>
</dbReference>
<dbReference type="InterPro" id="IPR003029">
    <property type="entry name" value="S1_domain"/>
</dbReference>
<dbReference type="InterPro" id="IPR004368">
    <property type="entry name" value="TIF_IF1"/>
</dbReference>
<dbReference type="NCBIfam" id="TIGR00008">
    <property type="entry name" value="infA"/>
    <property type="match status" value="1"/>
</dbReference>
<dbReference type="PANTHER" id="PTHR33370">
    <property type="entry name" value="TRANSLATION INITIATION FACTOR IF-1, CHLOROPLASTIC"/>
    <property type="match status" value="1"/>
</dbReference>
<dbReference type="PANTHER" id="PTHR33370:SF1">
    <property type="entry name" value="TRANSLATION INITIATION FACTOR IF-1, CHLOROPLASTIC"/>
    <property type="match status" value="1"/>
</dbReference>
<dbReference type="Pfam" id="PF01176">
    <property type="entry name" value="eIF-1a"/>
    <property type="match status" value="1"/>
</dbReference>
<dbReference type="SMART" id="SM00316">
    <property type="entry name" value="S1"/>
    <property type="match status" value="1"/>
</dbReference>
<dbReference type="SUPFAM" id="SSF50249">
    <property type="entry name" value="Nucleic acid-binding proteins"/>
    <property type="match status" value="1"/>
</dbReference>
<dbReference type="PROSITE" id="PS50832">
    <property type="entry name" value="S1_IF1_TYPE"/>
    <property type="match status" value="1"/>
</dbReference>
<feature type="chain" id="PRO_0000338759" description="Translation initiation factor IF-1">
    <location>
        <begin position="1"/>
        <end position="72"/>
    </location>
</feature>
<feature type="domain" description="S1-like" evidence="1">
    <location>
        <begin position="1"/>
        <end position="72"/>
    </location>
</feature>
<sequence>MAKDDVIVVDGKVIEALPNAMFRVELDNGHVVLCHISGKMRMHYIKILPNDTVKVEITPYSLDKGRITHRYK</sequence>
<protein>
    <recommendedName>
        <fullName evidence="1">Translation initiation factor IF-1</fullName>
    </recommendedName>
</protein>
<proteinExistence type="inferred from homology"/>
<comment type="function">
    <text evidence="1">One of the essential components for the initiation of protein synthesis. Stabilizes the binding of IF-2 and IF-3 on the 30S subunit to which N-formylmethionyl-tRNA(fMet) subsequently binds. Helps modulate mRNA selection, yielding the 30S pre-initiation complex (PIC). Upon addition of the 50S ribosomal subunit IF-1, IF-2 and IF-3 are released leaving the mature 70S translation initiation complex.</text>
</comment>
<comment type="subunit">
    <text evidence="1">Component of the 30S ribosomal translation pre-initiation complex which assembles on the 30S ribosome in the order IF-2 and IF-3, IF-1 and N-formylmethionyl-tRNA(fMet); mRNA recruitment can occur at any time during PIC assembly.</text>
</comment>
<comment type="subcellular location">
    <subcellularLocation>
        <location evidence="1">Cytoplasm</location>
    </subcellularLocation>
</comment>
<comment type="similarity">
    <text evidence="1">Belongs to the IF-1 family.</text>
</comment>
<name>IF1_ALIB4</name>
<reference key="1">
    <citation type="journal article" date="2007" name="PLoS ONE">
        <title>The complete genome sequence and analysis of the Epsilonproteobacterium Arcobacter butzleri.</title>
        <authorList>
            <person name="Miller W.G."/>
            <person name="Parker C.T."/>
            <person name="Rubenfield M."/>
            <person name="Mendz G.L."/>
            <person name="Woesten M.M.S.M."/>
            <person name="Ussery D.W."/>
            <person name="Stolz J.F."/>
            <person name="Binnewies T.T."/>
            <person name="Hallin P.F."/>
            <person name="Wang G."/>
            <person name="Malek J.A."/>
            <person name="Rogosin A."/>
            <person name="Stanker L.H."/>
            <person name="Mandrell R.E."/>
        </authorList>
    </citation>
    <scope>NUCLEOTIDE SEQUENCE [LARGE SCALE GENOMIC DNA]</scope>
    <source>
        <strain>RM4018</strain>
    </source>
</reference>
<gene>
    <name evidence="1" type="primary">infA</name>
    <name type="ordered locus">Abu_0773</name>
</gene>
<evidence type="ECO:0000255" key="1">
    <source>
        <dbReference type="HAMAP-Rule" id="MF_00075"/>
    </source>
</evidence>